<proteinExistence type="inferred from homology"/>
<accession>O26051</accession>
<evidence type="ECO:0000250" key="1">
    <source>
        <dbReference type="UniProtKB" id="P24230"/>
    </source>
</evidence>
<evidence type="ECO:0000250" key="2">
    <source>
        <dbReference type="UniProtKB" id="Q9WY48"/>
    </source>
</evidence>
<evidence type="ECO:0000255" key="3">
    <source>
        <dbReference type="PROSITE-ProRule" id="PRU00541"/>
    </source>
</evidence>
<evidence type="ECO:0000255" key="4">
    <source>
        <dbReference type="PROSITE-ProRule" id="PRU00542"/>
    </source>
</evidence>
<evidence type="ECO:0000269" key="5">
    <source>
    </source>
</evidence>
<evidence type="ECO:0000305" key="6"/>
<reference key="1">
    <citation type="journal article" date="1997" name="Nature">
        <title>The complete genome sequence of the gastric pathogen Helicobacter pylori.</title>
        <authorList>
            <person name="Tomb J.-F."/>
            <person name="White O."/>
            <person name="Kerlavage A.R."/>
            <person name="Clayton R.A."/>
            <person name="Sutton G.G."/>
            <person name="Fleischmann R.D."/>
            <person name="Ketchum K.A."/>
            <person name="Klenk H.-P."/>
            <person name="Gill S.R."/>
            <person name="Dougherty B.A."/>
            <person name="Nelson K.E."/>
            <person name="Quackenbush J."/>
            <person name="Zhou L."/>
            <person name="Kirkness E.F."/>
            <person name="Peterson S.N."/>
            <person name="Loftus B.J."/>
            <person name="Richardson D.L."/>
            <person name="Dodson R.J."/>
            <person name="Khalak H.G."/>
            <person name="Glodek A."/>
            <person name="McKenney K."/>
            <person name="FitzGerald L.M."/>
            <person name="Lee N."/>
            <person name="Adams M.D."/>
            <person name="Hickey E.K."/>
            <person name="Berg D.E."/>
            <person name="Gocayne J.D."/>
            <person name="Utterback T.R."/>
            <person name="Peterson J.D."/>
            <person name="Kelley J.M."/>
            <person name="Cotton M.D."/>
            <person name="Weidman J.F."/>
            <person name="Fujii C."/>
            <person name="Bowman C."/>
            <person name="Watthey L."/>
            <person name="Wallin E."/>
            <person name="Hayes W.S."/>
            <person name="Borodovsky M."/>
            <person name="Karp P.D."/>
            <person name="Smith H.O."/>
            <person name="Fraser C.M."/>
            <person name="Venter J.C."/>
        </authorList>
    </citation>
    <scope>NUCLEOTIDE SEQUENCE [LARGE SCALE GENOMIC DNA]</scope>
    <source>
        <strain>ATCC 700392 / 26695</strain>
    </source>
</reference>
<reference key="2">
    <citation type="journal article" date="2004" name="J. Bacteriol.">
        <title>Effect of host species on recG phenotypes in Helicobacter pylori and Escherichia coli.</title>
        <authorList>
            <person name="Kang J."/>
            <person name="Tavakoli D."/>
            <person name="Tschumi A."/>
            <person name="Aras R.A."/>
            <person name="Blaser M.J."/>
        </authorList>
    </citation>
    <scope>FUNCTION</scope>
    <scope>DISRUPTION PHENOTYPE</scope>
    <source>
        <strain>JP26</strain>
    </source>
</reference>
<organism>
    <name type="scientific">Helicobacter pylori (strain ATCC 700392 / 26695)</name>
    <name type="common">Campylobacter pylori</name>
    <dbReference type="NCBI Taxonomy" id="85962"/>
    <lineage>
        <taxon>Bacteria</taxon>
        <taxon>Pseudomonadati</taxon>
        <taxon>Campylobacterota</taxon>
        <taxon>Epsilonproteobacteria</taxon>
        <taxon>Campylobacterales</taxon>
        <taxon>Helicobacteraceae</taxon>
        <taxon>Helicobacter</taxon>
    </lineage>
</organism>
<feature type="chain" id="PRO_0000102143" description="ATP-dependent DNA helicase RecG">
    <location>
        <begin position="1"/>
        <end position="623"/>
    </location>
</feature>
<feature type="domain" description="Helicase ATP-binding" evidence="3">
    <location>
        <begin position="246"/>
        <end position="404"/>
    </location>
</feature>
<feature type="domain" description="Helicase C-terminal" evidence="4">
    <location>
        <begin position="422"/>
        <end position="578"/>
    </location>
</feature>
<feature type="region of interest" description="Wedge domain" evidence="2">
    <location>
        <begin position="32"/>
        <end position="120"/>
    </location>
</feature>
<feature type="short sequence motif" description="DEAH box" evidence="3">
    <location>
        <begin position="353"/>
        <end position="356"/>
    </location>
</feature>
<feature type="binding site" evidence="3">
    <location>
        <begin position="259"/>
        <end position="266"/>
    </location>
    <ligand>
        <name>ATP</name>
        <dbReference type="ChEBI" id="CHEBI:30616"/>
    </ligand>
</feature>
<dbReference type="EC" id="5.6.2.4" evidence="1"/>
<dbReference type="EMBL" id="AE000511">
    <property type="protein sequence ID" value="AAD08562.1"/>
    <property type="molecule type" value="Genomic_DNA"/>
</dbReference>
<dbReference type="PIR" id="C64710">
    <property type="entry name" value="C64710"/>
</dbReference>
<dbReference type="RefSeq" id="NP_208313.1">
    <property type="nucleotide sequence ID" value="NC_000915.1"/>
</dbReference>
<dbReference type="RefSeq" id="WP_001158370.1">
    <property type="nucleotide sequence ID" value="NC_018939.1"/>
</dbReference>
<dbReference type="SMR" id="O26051"/>
<dbReference type="DIP" id="DIP-3433N"/>
<dbReference type="FunCoup" id="O26051">
    <property type="interactions" value="334"/>
</dbReference>
<dbReference type="IntAct" id="O26051">
    <property type="interactions" value="9"/>
</dbReference>
<dbReference type="MINT" id="O26051"/>
<dbReference type="STRING" id="85962.HP_1523"/>
<dbReference type="PaxDb" id="85962-C694_07890"/>
<dbReference type="EnsemblBacteria" id="AAD08562">
    <property type="protein sequence ID" value="AAD08562"/>
    <property type="gene ID" value="HP_1523"/>
</dbReference>
<dbReference type="KEGG" id="heo:C694_07890"/>
<dbReference type="KEGG" id="hpy:HP_1523"/>
<dbReference type="PATRIC" id="fig|85962.47.peg.1637"/>
<dbReference type="eggNOG" id="COG1200">
    <property type="taxonomic scope" value="Bacteria"/>
</dbReference>
<dbReference type="InParanoid" id="O26051"/>
<dbReference type="OrthoDB" id="9804325at2"/>
<dbReference type="PhylomeDB" id="O26051"/>
<dbReference type="Proteomes" id="UP000000429">
    <property type="component" value="Chromosome"/>
</dbReference>
<dbReference type="GO" id="GO:0005524">
    <property type="term" value="F:ATP binding"/>
    <property type="evidence" value="ECO:0007669"/>
    <property type="project" value="UniProtKB-KW"/>
</dbReference>
<dbReference type="GO" id="GO:0016887">
    <property type="term" value="F:ATP hydrolysis activity"/>
    <property type="evidence" value="ECO:0007669"/>
    <property type="project" value="RHEA"/>
</dbReference>
<dbReference type="GO" id="GO:0003677">
    <property type="term" value="F:DNA binding"/>
    <property type="evidence" value="ECO:0007669"/>
    <property type="project" value="UniProtKB-KW"/>
</dbReference>
<dbReference type="GO" id="GO:0003678">
    <property type="term" value="F:DNA helicase activity"/>
    <property type="evidence" value="ECO:0000318"/>
    <property type="project" value="GO_Central"/>
</dbReference>
<dbReference type="GO" id="GO:0006310">
    <property type="term" value="P:DNA recombination"/>
    <property type="evidence" value="ECO:0007669"/>
    <property type="project" value="UniProtKB-KW"/>
</dbReference>
<dbReference type="GO" id="GO:0006281">
    <property type="term" value="P:DNA repair"/>
    <property type="evidence" value="ECO:0000318"/>
    <property type="project" value="GO_Central"/>
</dbReference>
<dbReference type="CDD" id="cd04488">
    <property type="entry name" value="RecG_wedge_OBF"/>
    <property type="match status" value="1"/>
</dbReference>
<dbReference type="Gene3D" id="3.40.50.300">
    <property type="entry name" value="P-loop containing nucleotide triphosphate hydrolases"/>
    <property type="match status" value="2"/>
</dbReference>
<dbReference type="InterPro" id="IPR011545">
    <property type="entry name" value="DEAD/DEAH_box_helicase_dom"/>
</dbReference>
<dbReference type="InterPro" id="IPR014001">
    <property type="entry name" value="Helicase_ATP-bd"/>
</dbReference>
<dbReference type="InterPro" id="IPR001650">
    <property type="entry name" value="Helicase_C-like"/>
</dbReference>
<dbReference type="InterPro" id="IPR027417">
    <property type="entry name" value="P-loop_NTPase"/>
</dbReference>
<dbReference type="InterPro" id="IPR047112">
    <property type="entry name" value="RecG/Mfd"/>
</dbReference>
<dbReference type="NCBIfam" id="NF008169">
    <property type="entry name" value="PRK10917.2-3"/>
    <property type="match status" value="1"/>
</dbReference>
<dbReference type="PANTHER" id="PTHR47964">
    <property type="entry name" value="ATP-DEPENDENT DNA HELICASE HOMOLOG RECG, CHLOROPLASTIC"/>
    <property type="match status" value="1"/>
</dbReference>
<dbReference type="PANTHER" id="PTHR47964:SF1">
    <property type="entry name" value="ATP-DEPENDENT DNA HELICASE HOMOLOG RECG, CHLOROPLASTIC"/>
    <property type="match status" value="1"/>
</dbReference>
<dbReference type="Pfam" id="PF00270">
    <property type="entry name" value="DEAD"/>
    <property type="match status" value="1"/>
</dbReference>
<dbReference type="Pfam" id="PF00271">
    <property type="entry name" value="Helicase_C"/>
    <property type="match status" value="1"/>
</dbReference>
<dbReference type="SMART" id="SM00487">
    <property type="entry name" value="DEXDc"/>
    <property type="match status" value="1"/>
</dbReference>
<dbReference type="SMART" id="SM00490">
    <property type="entry name" value="HELICc"/>
    <property type="match status" value="1"/>
</dbReference>
<dbReference type="SUPFAM" id="SSF52540">
    <property type="entry name" value="P-loop containing nucleoside triphosphate hydrolases"/>
    <property type="match status" value="1"/>
</dbReference>
<dbReference type="PROSITE" id="PS51192">
    <property type="entry name" value="HELICASE_ATP_BIND_1"/>
    <property type="match status" value="1"/>
</dbReference>
<dbReference type="PROSITE" id="PS51194">
    <property type="entry name" value="HELICASE_CTER"/>
    <property type="match status" value="1"/>
</dbReference>
<name>RECG_HELPY</name>
<sequence>MQETDNLLKTLNVKSLLEALLVYTPKGYKDLNLLERFETGLSGVLEVGILEKRNYAKVLKIFAYSKRFYKNLELVFFNYSAFHHSQFKTGESLFIYGKLEQSSFNQAYIINTPKIITKFGKISLIFKKVKNHKKIQENLQKLISLENLKKEGVKENIAHLLLEIFFPTPHFVKDFETNKNFPSQHLNALKYIEMLFYMKNLERKKLQFGAKIACPNNNERLKAFIASLPFKLTRDQQNAIKEIQNDLTSSIACKRLIIGDVGCGKTMVILASMVLTYPNKTLLMAPTSILAKQLYNEALKFLPPYFEVELLLGGSYKKRSNHLFETITHVVIGTQALLFDKRDLNEFALVITDEQHRFGTKQRYQLEKMASSKGNKPHSLQFSATPIPRTLALAKSAFVKTTMIREIPYPKEIETLVLHKRDFKIVMEKISEEIAKNHQVIVVYPLVNESEKIPYLSLSEGASFWQKRFKKVYTTSGQDKNKEEVIEEFRESGSILLATTLIEVGISLPRLSVMVILAPERLGLATLHQLRGRVSRNGLKGYCFLCTIQEENERLEKFADELDGFKIAELDLEYRKSGDLLQGGEQSGNSFEYIDLAKDENIIAEVKRDFLKAASVSRGTFEN</sequence>
<gene>
    <name type="primary">recG</name>
    <name type="ordered locus">HP_1523</name>
</gene>
<protein>
    <recommendedName>
        <fullName>ATP-dependent DNA helicase RecG</fullName>
        <ecNumber evidence="1">5.6.2.4</ecNumber>
    </recommendedName>
    <alternativeName>
        <fullName>DNA branch migration protein RecG</fullName>
    </alternativeName>
    <alternativeName>
        <fullName>Probable DNA 3'-5' helicase RecG</fullName>
    </alternativeName>
</protein>
<comment type="function">
    <text evidence="1">Plays a critical role in recombination and DNA repair. Helps process Holliday junction intermediates to mature products by catalyzing branch migration. Has replication fork regression activity, unwinds stalled or blocked replication forks to make a HJ that can be resolved. Has a DNA unwinding activity characteristic of a DNA helicase with 3'-5' polarity (By similarity).</text>
</comment>
<comment type="function">
    <text evidence="5">A deletion mutant does not display the same phenotypes seen in an E.coli recG deletion and is not affected in DNA repair in response to UV light or quinoline antibiotics; however this gene complements an E.coli deletion as well as the endogenous E.coli gene (PubMed:15516585).</text>
</comment>
<comment type="catalytic activity">
    <reaction evidence="1">
        <text>Couples ATP hydrolysis with the unwinding of duplex DNA by translocating in the 3'-5' direction.</text>
        <dbReference type="EC" id="5.6.2.4"/>
    </reaction>
</comment>
<comment type="catalytic activity">
    <reaction evidence="1">
        <text>ATP + H2O = ADP + phosphate + H(+)</text>
        <dbReference type="Rhea" id="RHEA:13065"/>
        <dbReference type="ChEBI" id="CHEBI:15377"/>
        <dbReference type="ChEBI" id="CHEBI:15378"/>
        <dbReference type="ChEBI" id="CHEBI:30616"/>
        <dbReference type="ChEBI" id="CHEBI:43474"/>
        <dbReference type="ChEBI" id="CHEBI:456216"/>
        <dbReference type="EC" id="5.6.2.4"/>
    </reaction>
</comment>
<comment type="subunit">
    <text evidence="2">Monomer (By similarity).</text>
</comment>
<comment type="domain">
    <text evidence="2">The wedge domain within the N-terminus inserts into the replication fork junction, where the lagging and leading strand split (By similarity).</text>
</comment>
<comment type="disruption phenotype">
    <text evidence="5">10-fold increase in intergenomic and intragenomic recombination frequencies, no change in UV sensitivity, slightly less susceptible to ciprofloxacin, no filamentation (PubMed:15516585).</text>
</comment>
<comment type="similarity">
    <text evidence="6">Belongs to the helicase family. RecG subfamily.</text>
</comment>
<keyword id="KW-0067">ATP-binding</keyword>
<keyword id="KW-0227">DNA damage</keyword>
<keyword id="KW-0233">DNA recombination</keyword>
<keyword id="KW-0234">DNA repair</keyword>
<keyword id="KW-0238">DNA-binding</keyword>
<keyword id="KW-0347">Helicase</keyword>
<keyword id="KW-0378">Hydrolase</keyword>
<keyword id="KW-0413">Isomerase</keyword>
<keyword id="KW-0547">Nucleotide-binding</keyword>
<keyword id="KW-1185">Reference proteome</keyword>